<keyword id="KW-0687">Ribonucleoprotein</keyword>
<keyword id="KW-0689">Ribosomal protein</keyword>
<keyword id="KW-0694">RNA-binding</keyword>
<keyword id="KW-0699">rRNA-binding</keyword>
<dbReference type="EMBL" id="CP001164">
    <property type="protein sequence ID" value="ACI34692.1"/>
    <property type="molecule type" value="Genomic_DNA"/>
</dbReference>
<dbReference type="RefSeq" id="WP_000059467.1">
    <property type="nucleotide sequence ID" value="NC_011353.1"/>
</dbReference>
<dbReference type="SMR" id="B5YS55"/>
<dbReference type="KEGG" id="ecf:ECH74115_4485"/>
<dbReference type="HOGENOM" id="CLU_148518_0_0_6"/>
<dbReference type="GO" id="GO:0022627">
    <property type="term" value="C:cytosolic small ribosomal subunit"/>
    <property type="evidence" value="ECO:0007669"/>
    <property type="project" value="TreeGrafter"/>
</dbReference>
<dbReference type="GO" id="GO:0019843">
    <property type="term" value="F:rRNA binding"/>
    <property type="evidence" value="ECO:0007669"/>
    <property type="project" value="UniProtKB-UniRule"/>
</dbReference>
<dbReference type="GO" id="GO:0003735">
    <property type="term" value="F:structural constituent of ribosome"/>
    <property type="evidence" value="ECO:0007669"/>
    <property type="project" value="InterPro"/>
</dbReference>
<dbReference type="GO" id="GO:0006412">
    <property type="term" value="P:translation"/>
    <property type="evidence" value="ECO:0007669"/>
    <property type="project" value="UniProtKB-UniRule"/>
</dbReference>
<dbReference type="CDD" id="cd00353">
    <property type="entry name" value="Ribosomal_S15p_S13e"/>
    <property type="match status" value="1"/>
</dbReference>
<dbReference type="FunFam" id="1.10.287.10:FF:000002">
    <property type="entry name" value="30S ribosomal protein S15"/>
    <property type="match status" value="1"/>
</dbReference>
<dbReference type="Gene3D" id="6.10.250.3130">
    <property type="match status" value="1"/>
</dbReference>
<dbReference type="Gene3D" id="1.10.287.10">
    <property type="entry name" value="S15/NS1, RNA-binding"/>
    <property type="match status" value="1"/>
</dbReference>
<dbReference type="HAMAP" id="MF_01343_B">
    <property type="entry name" value="Ribosomal_uS15_B"/>
    <property type="match status" value="1"/>
</dbReference>
<dbReference type="InterPro" id="IPR000589">
    <property type="entry name" value="Ribosomal_uS15"/>
</dbReference>
<dbReference type="InterPro" id="IPR005290">
    <property type="entry name" value="Ribosomal_uS15_bac-type"/>
</dbReference>
<dbReference type="InterPro" id="IPR009068">
    <property type="entry name" value="uS15_NS1_RNA-bd_sf"/>
</dbReference>
<dbReference type="NCBIfam" id="TIGR00952">
    <property type="entry name" value="S15_bact"/>
    <property type="match status" value="1"/>
</dbReference>
<dbReference type="PANTHER" id="PTHR23321">
    <property type="entry name" value="RIBOSOMAL PROTEIN S15, BACTERIAL AND ORGANELLAR"/>
    <property type="match status" value="1"/>
</dbReference>
<dbReference type="PANTHER" id="PTHR23321:SF26">
    <property type="entry name" value="SMALL RIBOSOMAL SUBUNIT PROTEIN US15M"/>
    <property type="match status" value="1"/>
</dbReference>
<dbReference type="Pfam" id="PF00312">
    <property type="entry name" value="Ribosomal_S15"/>
    <property type="match status" value="1"/>
</dbReference>
<dbReference type="SMART" id="SM01387">
    <property type="entry name" value="Ribosomal_S15"/>
    <property type="match status" value="1"/>
</dbReference>
<dbReference type="SUPFAM" id="SSF47060">
    <property type="entry name" value="S15/NS1 RNA-binding domain"/>
    <property type="match status" value="1"/>
</dbReference>
<dbReference type="PROSITE" id="PS00362">
    <property type="entry name" value="RIBOSOMAL_S15"/>
    <property type="match status" value="1"/>
</dbReference>
<comment type="function">
    <text evidence="1">One of the primary rRNA binding proteins, it binds directly to 16S rRNA where it helps nucleate assembly of the platform of the 30S subunit by binding and bridging several RNA helices of the 16S rRNA.</text>
</comment>
<comment type="function">
    <text evidence="1">Forms an intersubunit bridge (bridge B4) with the 23S rRNA of the 50S subunit in the ribosome.</text>
</comment>
<comment type="subunit">
    <text evidence="1">Part of the 30S ribosomal subunit. Forms a bridge to the 50S subunit in the 70S ribosome, contacting the 23S rRNA.</text>
</comment>
<comment type="similarity">
    <text evidence="1">Belongs to the universal ribosomal protein uS15 family.</text>
</comment>
<gene>
    <name evidence="1" type="primary">rpsO</name>
    <name type="ordered locus">ECH74115_4485</name>
</gene>
<protein>
    <recommendedName>
        <fullName evidence="1">Small ribosomal subunit protein uS15</fullName>
    </recommendedName>
    <alternativeName>
        <fullName evidence="2">30S ribosomal protein S15</fullName>
    </alternativeName>
</protein>
<feature type="chain" id="PRO_1000143109" description="Small ribosomal subunit protein uS15">
    <location>
        <begin position="1"/>
        <end position="89"/>
    </location>
</feature>
<evidence type="ECO:0000255" key="1">
    <source>
        <dbReference type="HAMAP-Rule" id="MF_01343"/>
    </source>
</evidence>
<evidence type="ECO:0000305" key="2"/>
<organism>
    <name type="scientific">Escherichia coli O157:H7 (strain EC4115 / EHEC)</name>
    <dbReference type="NCBI Taxonomy" id="444450"/>
    <lineage>
        <taxon>Bacteria</taxon>
        <taxon>Pseudomonadati</taxon>
        <taxon>Pseudomonadota</taxon>
        <taxon>Gammaproteobacteria</taxon>
        <taxon>Enterobacterales</taxon>
        <taxon>Enterobacteriaceae</taxon>
        <taxon>Escherichia</taxon>
    </lineage>
</organism>
<name>RS15_ECO5E</name>
<reference key="1">
    <citation type="journal article" date="2011" name="Proc. Natl. Acad. Sci. U.S.A.">
        <title>Genomic anatomy of Escherichia coli O157:H7 outbreaks.</title>
        <authorList>
            <person name="Eppinger M."/>
            <person name="Mammel M.K."/>
            <person name="Leclerc J.E."/>
            <person name="Ravel J."/>
            <person name="Cebula T.A."/>
        </authorList>
    </citation>
    <scope>NUCLEOTIDE SEQUENCE [LARGE SCALE GENOMIC DNA]</scope>
    <source>
        <strain>EC4115 / EHEC</strain>
    </source>
</reference>
<proteinExistence type="inferred from homology"/>
<sequence>MSLSTEATAKIVSEFGRDANDTGSTEVQVALLTAQINHLQGHFAEHKKDHHSRRGLLRMVSQRRKLLDYLKRKDVARYTRLIERLGLRR</sequence>
<accession>B5YS55</accession>